<accession>P23371</accession>
<accession>Q80HX2</accession>
<organismHost>
    <name type="scientific">Bos taurus</name>
    <name type="common">Bovine</name>
    <dbReference type="NCBI Taxonomy" id="9913"/>
</organismHost>
<keyword id="KW-0002">3D-structure</keyword>
<keyword id="KW-0067">ATP-binding</keyword>
<keyword id="KW-0106">Calcium</keyword>
<keyword id="KW-0244">Early protein</keyword>
<keyword id="KW-0479">Metal-binding</keyword>
<keyword id="KW-0507">mRNA processing</keyword>
<keyword id="KW-0547">Nucleotide-binding</keyword>
<keyword id="KW-1185">Reference proteome</keyword>
<keyword id="KW-0804">Transcription</keyword>
<keyword id="KW-0808">Transferase</keyword>
<sequence length="479" mass="55531">MNRNPDQNTLPNITLKIIETYLGRVPSVNEYHMLKLQARNIQKITVFNKDIFVSLVKKNKKRFFSDVNTSASEIKDRILSYFSKQTQTYNIGKLFTIIELQSVLVTTYTDILGVLTIKAPNVISSKISYNVTSMEELARDMLNSMNVAVIDKAKVMGRHNVSSLVKNVNKLMEEYLRRHNKSCICYGSYSLYLINPNIRYGDIDILQTNSRTFLIDLAFLIKFITGNNIILSKIPYLRNYMVIKDENDNHIIDSFNIRQDTMNVVPKIFIDNIYIVDPTFQLLNMIKMFSQIDRLEDLSKDPEKFNARMATMLEYVRYTHGIVFDGKRNNMPMKCIIDENNRIVTVTTKDYFSFKKCLVYLDENVLSSDILDLNADTSCDFESVTNSVYLIHDNIMYTYFSNTILLSDKGKVHEISARGLCAHILLYQMLTSGEYKQCLSDLLNSMMNRDKIPIYSHTERDKKPGRHGFINIEKDIIVF</sequence>
<reference key="1">
    <citation type="submission" date="1990-07" db="EMBL/GenBank/DDBJ databases">
        <authorList>
            <person name="Gershon P.D."/>
            <person name="Jones E.V."/>
            <person name="Moss B."/>
            <person name="Ahn B.-Y."/>
        </authorList>
    </citation>
    <scope>NUCLEOTIDE SEQUENCE [GENOMIC DNA]</scope>
</reference>
<reference key="2">
    <citation type="submission" date="2003-02" db="EMBL/GenBank/DDBJ databases">
        <title>Sequencing of the coding region of Vaccinia-WR to an average 9-fold redundancy and an error rate of 0.16/10kb.</title>
        <authorList>
            <person name="Esposito J.J."/>
            <person name="Frace A.M."/>
            <person name="Sammons S.A."/>
            <person name="Olsen-Rasmussen M."/>
            <person name="Osborne J."/>
            <person name="Wohlhueter R."/>
        </authorList>
    </citation>
    <scope>NUCLEOTIDE SEQUENCE [LARGE SCALE GENOMIC DNA]</scope>
</reference>
<reference key="3">
    <citation type="journal article" date="1991" name="Cell">
        <title>Poly(A) polymerase and a dissociable polyadenylation stimulatory factor encoded by vaccinia virus.</title>
        <authorList>
            <person name="Gershon P.D."/>
            <person name="Ahn B.-Y."/>
            <person name="Garfield M."/>
            <person name="Moss B."/>
        </authorList>
    </citation>
    <scope>FUNCTION</scope>
</reference>
<reference key="4">
    <citation type="journal article" date="2015" name="J. Virol.">
        <title>Deciphering poxvirus gene expression by RNA sequencing and ribosome profiling.</title>
        <authorList>
            <person name="Yang Z."/>
            <person name="Cao S."/>
            <person name="Martens C.A."/>
            <person name="Porcella S.F."/>
            <person name="Xie Z."/>
            <person name="Ma M."/>
            <person name="Shen B."/>
            <person name="Moss B."/>
        </authorList>
    </citation>
    <scope>INDUCTION</scope>
</reference>
<reference evidence="7 8" key="5">
    <citation type="journal article" date="2006" name="Mol. Cell">
        <title>Crystal structures of the vaccinia virus polyadenylate polymerase heterodimer: insights into ATP selectivity and processivity.</title>
        <authorList>
            <person name="Moure C.M."/>
            <person name="Bowman B.R."/>
            <person name="Gershon P.D."/>
            <person name="Quiocho F.A."/>
        </authorList>
    </citation>
    <scope>X-RAY CRYSTALLOGRAPHY (2.30 ANGSTROMS) OF 11-479 IN COMPLEX WITH CA(2+)</scope>
</reference>
<reference evidence="9 10 11" key="6">
    <citation type="journal article" date="2009" name="Structure">
        <title>Polymerase translocation with respect to single-stranded nucleic acid: looping or wrapping of primer around a poly(A) polymerase.</title>
        <authorList>
            <person name="Li C."/>
            <person name="Li H."/>
            <person name="Zhou S."/>
            <person name="Sun E."/>
            <person name="Yoshizawa J."/>
            <person name="Poulos T.L."/>
            <person name="Gershon P.D."/>
        </authorList>
    </citation>
    <scope>X-RAY CRYSTALLOGRAPHY (2.06 ANGSTROMS) IN COMPLEX WITH CA(2+)</scope>
</reference>
<reference evidence="12" key="7">
    <citation type="journal article" date="2013" name="Acta Crystallogr. D">
        <title>Domain-level rocking motion within a polymerase that translocates on single-stranded nucleic acid.</title>
        <authorList>
            <person name="Li H."/>
            <person name="Li C."/>
            <person name="Zhou S."/>
            <person name="Poulos T.L."/>
            <person name="Gershon P.D."/>
        </authorList>
    </citation>
    <scope>X-RAY CRYSTALLOGRAPHY (2.86 ANGSTROMS)</scope>
</reference>
<evidence type="ECO:0000255" key="1">
    <source>
        <dbReference type="PIRSR" id="PIRSR015693-50"/>
    </source>
</evidence>
<evidence type="ECO:0000269" key="2">
    <source>
    </source>
</evidence>
<evidence type="ECO:0000269" key="3">
    <source>
    </source>
</evidence>
<evidence type="ECO:0000269" key="4">
    <source>
    </source>
</evidence>
<evidence type="ECO:0000269" key="5">
    <source>
    </source>
</evidence>
<evidence type="ECO:0000305" key="6"/>
<evidence type="ECO:0007744" key="7">
    <source>
        <dbReference type="PDB" id="2GA9"/>
    </source>
</evidence>
<evidence type="ECO:0007744" key="8">
    <source>
        <dbReference type="PDB" id="2GAF"/>
    </source>
</evidence>
<evidence type="ECO:0007744" key="9">
    <source>
        <dbReference type="PDB" id="3ER8"/>
    </source>
</evidence>
<evidence type="ECO:0007744" key="10">
    <source>
        <dbReference type="PDB" id="3ER9"/>
    </source>
</evidence>
<evidence type="ECO:0007744" key="11">
    <source>
        <dbReference type="PDB" id="3ERC"/>
    </source>
</evidence>
<evidence type="ECO:0007744" key="12">
    <source>
        <dbReference type="PDB" id="3OWG"/>
    </source>
</evidence>
<evidence type="ECO:0007829" key="13">
    <source>
        <dbReference type="PDB" id="3ER9"/>
    </source>
</evidence>
<dbReference type="EC" id="2.7.7.19"/>
<dbReference type="EMBL" id="M36339">
    <property type="protein sequence ID" value="AAB59821.1"/>
    <property type="molecule type" value="Genomic_DNA"/>
</dbReference>
<dbReference type="EMBL" id="AY243312">
    <property type="protein sequence ID" value="AAO89336.1"/>
    <property type="molecule type" value="Genomic_DNA"/>
</dbReference>
<dbReference type="RefSeq" id="YP_232939.1">
    <property type="nucleotide sequence ID" value="NC_006998.1"/>
</dbReference>
<dbReference type="PDB" id="2GA9">
    <property type="method" value="X-ray"/>
    <property type="resolution" value="2.30 A"/>
    <property type="chains" value="D=11-479"/>
</dbReference>
<dbReference type="PDB" id="2GAF">
    <property type="method" value="X-ray"/>
    <property type="resolution" value="2.40 A"/>
    <property type="chains" value="D=11-479"/>
</dbReference>
<dbReference type="PDB" id="3ER8">
    <property type="method" value="X-ray"/>
    <property type="resolution" value="3.18 A"/>
    <property type="chains" value="C/D=1-479"/>
</dbReference>
<dbReference type="PDB" id="3ER9">
    <property type="method" value="X-ray"/>
    <property type="resolution" value="2.06 A"/>
    <property type="chains" value="B=1-479"/>
</dbReference>
<dbReference type="PDB" id="3ERC">
    <property type="method" value="X-ray"/>
    <property type="resolution" value="3.21 A"/>
    <property type="chains" value="C/D=1-479"/>
</dbReference>
<dbReference type="PDB" id="3OWG">
    <property type="method" value="X-ray"/>
    <property type="resolution" value="2.86 A"/>
    <property type="chains" value="A/B=1-479"/>
</dbReference>
<dbReference type="PDBsum" id="2GA9"/>
<dbReference type="PDBsum" id="2GAF"/>
<dbReference type="PDBsum" id="3ER8"/>
<dbReference type="PDBsum" id="3ER9"/>
<dbReference type="PDBsum" id="3ERC"/>
<dbReference type="PDBsum" id="3OWG"/>
<dbReference type="SMR" id="P23371"/>
<dbReference type="DIP" id="DIP-48309N"/>
<dbReference type="IntAct" id="P23371">
    <property type="interactions" value="1"/>
</dbReference>
<dbReference type="DNASU" id="3707514"/>
<dbReference type="GeneID" id="3707514"/>
<dbReference type="KEGG" id="vg:3707514"/>
<dbReference type="EvolutionaryTrace" id="P23371"/>
<dbReference type="Proteomes" id="UP000000344">
    <property type="component" value="Genome"/>
</dbReference>
<dbReference type="GO" id="GO:0005524">
    <property type="term" value="F:ATP binding"/>
    <property type="evidence" value="ECO:0007669"/>
    <property type="project" value="UniProtKB-KW"/>
</dbReference>
<dbReference type="GO" id="GO:0046872">
    <property type="term" value="F:metal ion binding"/>
    <property type="evidence" value="ECO:0007669"/>
    <property type="project" value="UniProtKB-KW"/>
</dbReference>
<dbReference type="GO" id="GO:1990817">
    <property type="term" value="F:poly(A) RNA polymerase activity"/>
    <property type="evidence" value="ECO:0007669"/>
    <property type="project" value="UniProtKB-EC"/>
</dbReference>
<dbReference type="GO" id="GO:0006397">
    <property type="term" value="P:mRNA processing"/>
    <property type="evidence" value="ECO:0007669"/>
    <property type="project" value="UniProtKB-KW"/>
</dbReference>
<dbReference type="CDD" id="cd20919">
    <property type="entry name" value="polyA_pol_Pox"/>
    <property type="match status" value="1"/>
</dbReference>
<dbReference type="Gene3D" id="1.20.1270.320">
    <property type="entry name" value="Poxvirus poly(A) polymerase, N domain"/>
    <property type="match status" value="1"/>
</dbReference>
<dbReference type="Gene3D" id="3.30.460.60">
    <property type="entry name" value="Poxvirus poly(A) polymerase, nucleotidyltransferase domain"/>
    <property type="match status" value="1"/>
</dbReference>
<dbReference type="InterPro" id="IPR004976">
    <property type="entry name" value="PolyA_pol_cat_Poxvir"/>
</dbReference>
<dbReference type="InterPro" id="IPR037265">
    <property type="entry name" value="PolyA_pol_cat_sf"/>
</dbReference>
<dbReference type="InterPro" id="IPR024231">
    <property type="entry name" value="PolyA_pol_nucTrfase_Poxvir"/>
</dbReference>
<dbReference type="InterPro" id="IPR038419">
    <property type="entry name" value="PolyA_pol_nucTrfase_sf_Poxvir"/>
</dbReference>
<dbReference type="InterPro" id="IPR024397">
    <property type="entry name" value="Poxvirus_polyA_pol_cat_C"/>
</dbReference>
<dbReference type="InterPro" id="IPR024398">
    <property type="entry name" value="Poxvirus_polyA_pol_cat_N"/>
</dbReference>
<dbReference type="InterPro" id="IPR038337">
    <property type="entry name" value="Poxvirus_polyA_pol_cat_N_sf"/>
</dbReference>
<dbReference type="Pfam" id="PF03296">
    <property type="entry name" value="Pox_polyA_pol"/>
    <property type="match status" value="1"/>
</dbReference>
<dbReference type="Pfam" id="PF12629">
    <property type="entry name" value="Pox_polyA_pol_C"/>
    <property type="match status" value="1"/>
</dbReference>
<dbReference type="Pfam" id="PF12630">
    <property type="entry name" value="Pox_polyA_pol_N"/>
    <property type="match status" value="1"/>
</dbReference>
<dbReference type="PIRSF" id="PIRSF015693">
    <property type="entry name" value="VAC-48L_nuct"/>
    <property type="match status" value="1"/>
</dbReference>
<dbReference type="SUPFAM" id="SSF160957">
    <property type="entry name" value="Poly(A) polymerase catalytic subunit-like"/>
    <property type="match status" value="1"/>
</dbReference>
<gene>
    <name type="primary">OPG063</name>
    <name type="synonym">PAPL</name>
    <name type="ordered locus">VACWR057</name>
    <name type="ORF">E1L</name>
</gene>
<comment type="function">
    <text evidence="3">Polymerase that creates the 3'-poly(A) tail of mRNA's.</text>
</comment>
<comment type="catalytic activity">
    <reaction>
        <text>RNA(n) + ATP = RNA(n)-3'-adenine ribonucleotide + diphosphate</text>
        <dbReference type="Rhea" id="RHEA:11332"/>
        <dbReference type="Rhea" id="RHEA-COMP:14527"/>
        <dbReference type="Rhea" id="RHEA-COMP:17347"/>
        <dbReference type="ChEBI" id="CHEBI:30616"/>
        <dbReference type="ChEBI" id="CHEBI:33019"/>
        <dbReference type="ChEBI" id="CHEBI:140395"/>
        <dbReference type="ChEBI" id="CHEBI:173115"/>
        <dbReference type="EC" id="2.7.7.19"/>
    </reaction>
</comment>
<comment type="subunit">
    <text>Heterodimer of a large (catalytic) subunit and a small (regulatory) subunit.</text>
</comment>
<comment type="induction">
    <text evidence="5">Expressed in the early phase of the viral replicative cycle.</text>
</comment>
<comment type="similarity">
    <text evidence="6">Belongs to the poxviridae poly(A) polymerase catalytic subunit family.</text>
</comment>
<organism>
    <name type="scientific">Vaccinia virus (strain Western Reserve)</name>
    <name type="common">VACV</name>
    <name type="synonym">Vaccinia virus (strain WR)</name>
    <dbReference type="NCBI Taxonomy" id="10254"/>
    <lineage>
        <taxon>Viruses</taxon>
        <taxon>Varidnaviria</taxon>
        <taxon>Bamfordvirae</taxon>
        <taxon>Nucleocytoviricota</taxon>
        <taxon>Pokkesviricetes</taxon>
        <taxon>Chitovirales</taxon>
        <taxon>Poxviridae</taxon>
        <taxon>Chordopoxvirinae</taxon>
        <taxon>Orthopoxvirus</taxon>
        <taxon>Vaccinia virus</taxon>
    </lineage>
</organism>
<name>PAP1_VACCW</name>
<protein>
    <recommendedName>
        <fullName>Poly(A) polymerase catalytic subunit</fullName>
        <ecNumber>2.7.7.19</ecNumber>
    </recommendedName>
    <alternativeName>
        <fullName>Poly(A) polymerase large subunit</fullName>
        <shortName>PAP-L</shortName>
    </alternativeName>
    <alternativeName>
        <fullName>VP55</fullName>
    </alternativeName>
</protein>
<proteinExistence type="evidence at protein level"/>
<feature type="chain" id="PRO_0000099107" description="Poly(A) polymerase catalytic subunit">
    <location>
        <begin position="1"/>
        <end position="479"/>
    </location>
</feature>
<feature type="active site" evidence="1">
    <location>
        <position position="202"/>
    </location>
</feature>
<feature type="active site" evidence="1">
    <location>
        <position position="204"/>
    </location>
</feature>
<feature type="binding site" evidence="2 4 7 10 11">
    <location>
        <position position="202"/>
    </location>
    <ligand>
        <name>Ca(2+)</name>
        <dbReference type="ChEBI" id="CHEBI:29108"/>
        <label>1</label>
    </ligand>
</feature>
<feature type="binding site" evidence="2 4 11">
    <location>
        <position position="202"/>
    </location>
    <ligand>
        <name>Ca(2+)</name>
        <dbReference type="ChEBI" id="CHEBI:29108"/>
        <label>2</label>
    </ligand>
</feature>
<feature type="binding site" evidence="2 4 7 10 11">
    <location>
        <position position="204"/>
    </location>
    <ligand>
        <name>Ca(2+)</name>
        <dbReference type="ChEBI" id="CHEBI:29108"/>
        <label>1</label>
    </ligand>
</feature>
<feature type="binding site" evidence="2 4 11">
    <location>
        <position position="204"/>
    </location>
    <ligand>
        <name>Ca(2+)</name>
        <dbReference type="ChEBI" id="CHEBI:29108"/>
        <label>2</label>
    </ligand>
</feature>
<feature type="binding site" evidence="2 4 11">
    <location>
        <position position="253"/>
    </location>
    <ligand>
        <name>Ca(2+)</name>
        <dbReference type="ChEBI" id="CHEBI:29108"/>
        <label>2</label>
    </ligand>
</feature>
<feature type="sequence conflict" description="In Ref. 1; AAB59821." evidence="6" ref="1">
    <original>L</original>
    <variation>F</variation>
    <location>
        <position position="10"/>
    </location>
</feature>
<feature type="sequence conflict" description="In Ref. 1; AAB59821." evidence="6" ref="1">
    <original>N</original>
    <variation>D</variation>
    <location>
        <position position="68"/>
    </location>
</feature>
<feature type="sequence conflict" description="In Ref. 1; AAB59821." evidence="6" ref="1">
    <original>R</original>
    <variation>L</variation>
    <location>
        <position position="199"/>
    </location>
</feature>
<feature type="helix" evidence="13">
    <location>
        <begin position="13"/>
        <end position="22"/>
    </location>
</feature>
<feature type="helix" evidence="13">
    <location>
        <begin position="28"/>
        <end position="34"/>
    </location>
</feature>
<feature type="helix" evidence="13">
    <location>
        <begin position="35"/>
        <end position="37"/>
    </location>
</feature>
<feature type="helix" evidence="13">
    <location>
        <begin position="38"/>
        <end position="46"/>
    </location>
</feature>
<feature type="helix" evidence="13">
    <location>
        <begin position="49"/>
        <end position="63"/>
    </location>
</feature>
<feature type="helix" evidence="13">
    <location>
        <begin position="71"/>
        <end position="81"/>
    </location>
</feature>
<feature type="helix" evidence="13">
    <location>
        <begin position="82"/>
        <end position="87"/>
    </location>
</feature>
<feature type="helix" evidence="13">
    <location>
        <begin position="91"/>
        <end position="111"/>
    </location>
</feature>
<feature type="helix" evidence="13">
    <location>
        <begin position="113"/>
        <end position="116"/>
    </location>
</feature>
<feature type="helix" evidence="13">
    <location>
        <begin position="131"/>
        <end position="134"/>
    </location>
</feature>
<feature type="helix" evidence="13">
    <location>
        <begin position="135"/>
        <end position="145"/>
    </location>
</feature>
<feature type="helix" evidence="13">
    <location>
        <begin position="165"/>
        <end position="178"/>
    </location>
</feature>
<feature type="turn" evidence="13">
    <location>
        <begin position="180"/>
        <end position="182"/>
    </location>
</feature>
<feature type="strand" evidence="13">
    <location>
        <begin position="183"/>
        <end position="187"/>
    </location>
</feature>
<feature type="helix" evidence="13">
    <location>
        <begin position="188"/>
        <end position="192"/>
    </location>
</feature>
<feature type="strand" evidence="13">
    <location>
        <begin position="204"/>
        <end position="209"/>
    </location>
</feature>
<feature type="helix" evidence="13">
    <location>
        <begin position="210"/>
        <end position="225"/>
    </location>
</feature>
<feature type="strand" evidence="13">
    <location>
        <begin position="230"/>
        <end position="233"/>
    </location>
</feature>
<feature type="strand" evidence="13">
    <location>
        <begin position="237"/>
        <end position="244"/>
    </location>
</feature>
<feature type="strand" evidence="13">
    <location>
        <begin position="250"/>
        <end position="256"/>
    </location>
</feature>
<feature type="helix" evidence="13">
    <location>
        <begin position="259"/>
        <end position="264"/>
    </location>
</feature>
<feature type="strand" evidence="13">
    <location>
        <begin position="267"/>
        <end position="270"/>
    </location>
</feature>
<feature type="strand" evidence="13">
    <location>
        <begin position="273"/>
        <end position="276"/>
    </location>
</feature>
<feature type="helix" evidence="13">
    <location>
        <begin position="278"/>
        <end position="288"/>
    </location>
</feature>
<feature type="helix" evidence="13">
    <location>
        <begin position="292"/>
        <end position="300"/>
    </location>
</feature>
<feature type="helix" evidence="13">
    <location>
        <begin position="302"/>
        <end position="320"/>
    </location>
</feature>
<feature type="strand" evidence="13">
    <location>
        <begin position="335"/>
        <end position="338"/>
    </location>
</feature>
<feature type="turn" evidence="13">
    <location>
        <begin position="339"/>
        <end position="342"/>
    </location>
</feature>
<feature type="strand" evidence="13">
    <location>
        <begin position="343"/>
        <end position="347"/>
    </location>
</feature>
<feature type="turn" evidence="13">
    <location>
        <begin position="349"/>
        <end position="351"/>
    </location>
</feature>
<feature type="strand" evidence="13">
    <location>
        <begin position="352"/>
        <end position="361"/>
    </location>
</feature>
<feature type="helix" evidence="13">
    <location>
        <begin position="363"/>
        <end position="372"/>
    </location>
</feature>
<feature type="helix" evidence="13">
    <location>
        <begin position="382"/>
        <end position="384"/>
    </location>
</feature>
<feature type="strand" evidence="13">
    <location>
        <begin position="386"/>
        <end position="392"/>
    </location>
</feature>
<feature type="strand" evidence="13">
    <location>
        <begin position="395"/>
        <end position="399"/>
    </location>
</feature>
<feature type="strand" evidence="13">
    <location>
        <begin position="405"/>
        <end position="408"/>
    </location>
</feature>
<feature type="helix" evidence="13">
    <location>
        <begin position="414"/>
        <end position="430"/>
    </location>
</feature>
<feature type="helix" evidence="13">
    <location>
        <begin position="436"/>
        <end position="444"/>
    </location>
</feature>
<feature type="strand" evidence="13">
    <location>
        <begin position="468"/>
        <end position="471"/>
    </location>
</feature>
<feature type="turn" evidence="13">
    <location>
        <begin position="472"/>
        <end position="475"/>
    </location>
</feature>
<feature type="strand" evidence="13">
    <location>
        <begin position="476"/>
        <end position="478"/>
    </location>
</feature>